<accession>Q8CHV6</accession>
<accession>Q3TZD7</accession>
<accession>Q8BNK0</accession>
<accession>Q8R3H5</accession>
<evidence type="ECO:0000250" key="1">
    <source>
        <dbReference type="UniProtKB" id="O75478"/>
    </source>
</evidence>
<evidence type="ECO:0000255" key="2">
    <source>
        <dbReference type="PROSITE-ProRule" id="PRU00228"/>
    </source>
</evidence>
<evidence type="ECO:0000255" key="3">
    <source>
        <dbReference type="PROSITE-ProRule" id="PRU00247"/>
    </source>
</evidence>
<evidence type="ECO:0000255" key="4">
    <source>
        <dbReference type="PROSITE-ProRule" id="PRU00624"/>
    </source>
</evidence>
<evidence type="ECO:0000269" key="5">
    <source>
    </source>
</evidence>
<evidence type="ECO:0000305" key="6"/>
<evidence type="ECO:0007829" key="7">
    <source>
        <dbReference type="PDB" id="2AQE"/>
    </source>
</evidence>
<evidence type="ECO:0007829" key="8">
    <source>
        <dbReference type="PDB" id="2AQF"/>
    </source>
</evidence>
<organism>
    <name type="scientific">Mus musculus</name>
    <name type="common">Mouse</name>
    <dbReference type="NCBI Taxonomy" id="10090"/>
    <lineage>
        <taxon>Eukaryota</taxon>
        <taxon>Metazoa</taxon>
        <taxon>Chordata</taxon>
        <taxon>Craniata</taxon>
        <taxon>Vertebrata</taxon>
        <taxon>Euteleostomi</taxon>
        <taxon>Mammalia</taxon>
        <taxon>Eutheria</taxon>
        <taxon>Euarchontoglires</taxon>
        <taxon>Glires</taxon>
        <taxon>Rodentia</taxon>
        <taxon>Myomorpha</taxon>
        <taxon>Muroidea</taxon>
        <taxon>Muridae</taxon>
        <taxon>Murinae</taxon>
        <taxon>Mus</taxon>
        <taxon>Mus</taxon>
    </lineage>
</organism>
<comment type="function">
    <text evidence="1 5">Component of the ATAC complex, a complex with histone acetyltransferase activity on histones H3 and H4 (By similarity). Required for the function of some acidic activation domains, which activate transcription from a distant site (By similarity). Binds double-stranded DNA (PubMed:16299514). Binds dinucleosomes, probably at the linker region between neighboring nucleosomes (PubMed:16299514). Plays a role in chromatin remodeling (By similarity). May promote TP53/p53 'Lys-321' acetylation, leading to reduced TP53 stability and transcriptional activity (By similarity). May also promote XRCC6 acetylation thus facilitating cell apoptosis in response to DNA damage (By similarity).</text>
</comment>
<comment type="subunit">
    <text evidence="1">Interacts with GCN5. Interacts with NR3C1. Associated with the P/CAF protein in the PCAF complex. Component of the PCAF complex, at least composed of TADA2L/ADA2, TADA3L/ADA3, TAF5L/PAF65-beta, TAF6L/PAF65-alpha, TAF10/TAFII30, TAF12/TAFII20, TAF9/TAFII31 and TRRAP. Component of the ADA2A-containing complex (ATAC), composed of KAT14, KAT2A, TADA2L, TADA3L, ZZ3, MBIP, WDR5, YEATS2, CCDC101 and DR1. Interacts with CCDC134.</text>
</comment>
<comment type="subcellular location">
    <subcellularLocation>
        <location evidence="4 5">Nucleus</location>
    </subcellularLocation>
    <subcellularLocation>
        <location evidence="5">Chromosome</location>
    </subcellularLocation>
</comment>
<comment type="sequence caution" evidence="6">
    <conflict type="erroneous initiation">
        <sequence resource="EMBL-CDS" id="AAH25448"/>
    </conflict>
</comment>
<comment type="sequence caution" evidence="6">
    <conflict type="erroneous initiation">
        <sequence resource="EMBL-CDS" id="BAC38925"/>
    </conflict>
</comment>
<feature type="chain" id="PRO_0000240669" description="Transcriptional adapter 2-alpha">
    <location>
        <begin position="1"/>
        <end position="443"/>
    </location>
</feature>
<feature type="domain" description="SANT" evidence="4">
    <location>
        <begin position="70"/>
        <end position="122"/>
    </location>
</feature>
<feature type="domain" description="SWIRM" evidence="3">
    <location>
        <begin position="356"/>
        <end position="443"/>
    </location>
</feature>
<feature type="zinc finger region" description="ZZ-type" evidence="2">
    <location>
        <begin position="12"/>
        <end position="69"/>
    </location>
</feature>
<feature type="DNA-binding region">
    <location>
        <begin position="426"/>
        <end position="435"/>
    </location>
</feature>
<feature type="binding site" evidence="2">
    <location>
        <position position="17"/>
    </location>
    <ligand>
        <name>Zn(2+)</name>
        <dbReference type="ChEBI" id="CHEBI:29105"/>
        <label>1</label>
    </ligand>
</feature>
<feature type="binding site" evidence="2">
    <location>
        <position position="20"/>
    </location>
    <ligand>
        <name>Zn(2+)</name>
        <dbReference type="ChEBI" id="CHEBI:29105"/>
        <label>1</label>
    </ligand>
</feature>
<feature type="binding site" evidence="2">
    <location>
        <position position="31"/>
    </location>
    <ligand>
        <name>Zn(2+)</name>
        <dbReference type="ChEBI" id="CHEBI:29105"/>
        <label>2</label>
    </ligand>
</feature>
<feature type="binding site" evidence="2">
    <location>
        <position position="34"/>
    </location>
    <ligand>
        <name>Zn(2+)</name>
        <dbReference type="ChEBI" id="CHEBI:29105"/>
        <label>2</label>
    </ligand>
</feature>
<feature type="binding site" evidence="2">
    <location>
        <position position="42"/>
    </location>
    <ligand>
        <name>Zn(2+)</name>
        <dbReference type="ChEBI" id="CHEBI:29105"/>
        <label>1</label>
    </ligand>
</feature>
<feature type="binding site" evidence="2">
    <location>
        <position position="45"/>
    </location>
    <ligand>
        <name>Zn(2+)</name>
        <dbReference type="ChEBI" id="CHEBI:29105"/>
        <label>1</label>
    </ligand>
</feature>
<feature type="binding site" evidence="2">
    <location>
        <position position="55"/>
    </location>
    <ligand>
        <name>Zn(2+)</name>
        <dbReference type="ChEBI" id="CHEBI:29105"/>
        <label>2</label>
    </ligand>
</feature>
<feature type="binding site" evidence="2">
    <location>
        <position position="59"/>
    </location>
    <ligand>
        <name>Zn(2+)</name>
        <dbReference type="ChEBI" id="CHEBI:29105"/>
        <label>2</label>
    </ligand>
</feature>
<feature type="modified residue" description="Phosphoserine" evidence="1">
    <location>
        <position position="6"/>
    </location>
</feature>
<feature type="cross-link" description="Glycyl lysine isopeptide (Lys-Gly) (interchain with G-Cter in SUMO2)" evidence="1">
    <location>
        <position position="132"/>
    </location>
</feature>
<feature type="cross-link" description="Glycyl lysine isopeptide (Lys-Gly) (interchain with G-Cter in SUMO2)" evidence="1">
    <location>
        <position position="138"/>
    </location>
</feature>
<feature type="mutagenesis site" description="Reduces DNA binding." evidence="5">
    <original>K</original>
    <variation>A</variation>
    <location>
        <position position="426"/>
    </location>
</feature>
<feature type="mutagenesis site" description="Loss of nuclear localization. Reduces DNA binding." evidence="5">
    <original>R</original>
    <variation>A</variation>
    <location>
        <position position="428"/>
    </location>
</feature>
<feature type="mutagenesis site" description="Reduces DNA binding." evidence="5">
    <original>K</original>
    <variation>A</variation>
    <location>
        <position position="429"/>
    </location>
</feature>
<feature type="sequence conflict" description="In Ref. 1; BAE34272." evidence="6" ref="1">
    <original>K</original>
    <variation>E</variation>
    <location>
        <position position="216"/>
    </location>
</feature>
<feature type="strand" evidence="7">
    <location>
        <begin position="365"/>
        <end position="372"/>
    </location>
</feature>
<feature type="turn" evidence="7">
    <location>
        <begin position="373"/>
        <end position="375"/>
    </location>
</feature>
<feature type="helix" evidence="7">
    <location>
        <begin position="378"/>
        <end position="386"/>
    </location>
</feature>
<feature type="helix" evidence="7">
    <location>
        <begin position="391"/>
        <end position="408"/>
    </location>
</feature>
<feature type="helix" evidence="7">
    <location>
        <begin position="413"/>
        <end position="417"/>
    </location>
</feature>
<feature type="strand" evidence="7">
    <location>
        <begin position="420"/>
        <end position="424"/>
    </location>
</feature>
<feature type="helix" evidence="7">
    <location>
        <begin position="425"/>
        <end position="436"/>
    </location>
</feature>
<feature type="strand" evidence="8">
    <location>
        <begin position="438"/>
        <end position="440"/>
    </location>
</feature>
<dbReference type="EMBL" id="AK083467">
    <property type="protein sequence ID" value="BAC38925.1"/>
    <property type="status" value="ALT_INIT"/>
    <property type="molecule type" value="mRNA"/>
</dbReference>
<dbReference type="EMBL" id="AK157938">
    <property type="protein sequence ID" value="BAE34272.1"/>
    <property type="molecule type" value="mRNA"/>
</dbReference>
<dbReference type="EMBL" id="AL596447">
    <property type="status" value="NOT_ANNOTATED_CDS"/>
    <property type="molecule type" value="Genomic_DNA"/>
</dbReference>
<dbReference type="EMBL" id="AL645615">
    <property type="status" value="NOT_ANNOTATED_CDS"/>
    <property type="molecule type" value="Genomic_DNA"/>
</dbReference>
<dbReference type="EMBL" id="BC025448">
    <property type="protein sequence ID" value="AAH25448.1"/>
    <property type="status" value="ALT_INIT"/>
    <property type="molecule type" value="mRNA"/>
</dbReference>
<dbReference type="EMBL" id="BC038821">
    <property type="protein sequence ID" value="AAH38821.1"/>
    <property type="molecule type" value="mRNA"/>
</dbReference>
<dbReference type="CCDS" id="CCDS25183.1"/>
<dbReference type="RefSeq" id="NP_766150.1">
    <property type="nucleotide sequence ID" value="NM_172562.3"/>
</dbReference>
<dbReference type="PDB" id="2AQE">
    <property type="method" value="NMR"/>
    <property type="chains" value="A=355-443"/>
</dbReference>
<dbReference type="PDB" id="2AQF">
    <property type="method" value="NMR"/>
    <property type="chains" value="A=355-443"/>
</dbReference>
<dbReference type="PDB" id="2CUJ">
    <property type="method" value="NMR"/>
    <property type="chains" value="A=343-443"/>
</dbReference>
<dbReference type="PDBsum" id="2AQE"/>
<dbReference type="PDBsum" id="2AQF"/>
<dbReference type="PDBsum" id="2CUJ"/>
<dbReference type="BMRB" id="Q8CHV6"/>
<dbReference type="SMR" id="Q8CHV6"/>
<dbReference type="BioGRID" id="229835">
    <property type="interactions" value="8"/>
</dbReference>
<dbReference type="ComplexPortal" id="CPX-1024">
    <property type="entry name" value="PCAF histone acetylase complex"/>
</dbReference>
<dbReference type="ComplexPortal" id="CPX-1025">
    <property type="entry name" value="GCN5-containing ATAC complex"/>
</dbReference>
<dbReference type="ComplexPortal" id="CPX-1029">
    <property type="entry name" value="PCAF-containing ATAC complex"/>
</dbReference>
<dbReference type="FunCoup" id="Q8CHV6">
    <property type="interactions" value="278"/>
</dbReference>
<dbReference type="IntAct" id="Q8CHV6">
    <property type="interactions" value="33"/>
</dbReference>
<dbReference type="MINT" id="Q8CHV6"/>
<dbReference type="STRING" id="10090.ENSMUSP00000018795"/>
<dbReference type="iPTMnet" id="Q8CHV6"/>
<dbReference type="PhosphoSitePlus" id="Q8CHV6"/>
<dbReference type="PaxDb" id="10090-ENSMUSP00000018795"/>
<dbReference type="ProteomicsDB" id="259342"/>
<dbReference type="Antibodypedia" id="72747">
    <property type="antibodies" value="189 antibodies from 21 providers"/>
</dbReference>
<dbReference type="DNASU" id="217031"/>
<dbReference type="Ensembl" id="ENSMUST00000018795.13">
    <property type="protein sequence ID" value="ENSMUSP00000018795.7"/>
    <property type="gene ID" value="ENSMUSG00000018651.15"/>
</dbReference>
<dbReference type="GeneID" id="217031"/>
<dbReference type="KEGG" id="mmu:217031"/>
<dbReference type="UCSC" id="uc007kqf.1">
    <property type="organism name" value="mouse"/>
</dbReference>
<dbReference type="AGR" id="MGI:2144471"/>
<dbReference type="CTD" id="6871"/>
<dbReference type="MGI" id="MGI:2144471">
    <property type="gene designation" value="Tada2a"/>
</dbReference>
<dbReference type="VEuPathDB" id="HostDB:ENSMUSG00000018651"/>
<dbReference type="eggNOG" id="KOG0457">
    <property type="taxonomic scope" value="Eukaryota"/>
</dbReference>
<dbReference type="GeneTree" id="ENSGT00940000156751"/>
<dbReference type="HOGENOM" id="CLU_018273_2_1_1"/>
<dbReference type="InParanoid" id="Q8CHV6"/>
<dbReference type="OMA" id="YNGNHRP"/>
<dbReference type="OrthoDB" id="270417at2759"/>
<dbReference type="PhylomeDB" id="Q8CHV6"/>
<dbReference type="TreeFam" id="TF313975"/>
<dbReference type="Reactome" id="R-MMU-9772755">
    <property type="pathway name" value="Formation of WDR5-containing histone-modifying complexes"/>
</dbReference>
<dbReference type="BioGRID-ORCS" id="217031">
    <property type="hits" value="17 hits in 81 CRISPR screens"/>
</dbReference>
<dbReference type="ChiTaRS" id="Tada2a">
    <property type="organism name" value="mouse"/>
</dbReference>
<dbReference type="EvolutionaryTrace" id="Q8CHV6"/>
<dbReference type="PRO" id="PR:Q8CHV6"/>
<dbReference type="Proteomes" id="UP000000589">
    <property type="component" value="Chromosome 11"/>
</dbReference>
<dbReference type="RNAct" id="Q8CHV6">
    <property type="molecule type" value="protein"/>
</dbReference>
<dbReference type="Bgee" id="ENSMUSG00000018651">
    <property type="expression patterns" value="Expressed in metanephric proximal tubule and 245 other cell types or tissues"/>
</dbReference>
<dbReference type="ExpressionAtlas" id="Q8CHV6">
    <property type="expression patterns" value="baseline and differential"/>
</dbReference>
<dbReference type="GO" id="GO:0140672">
    <property type="term" value="C:ATAC complex"/>
    <property type="evidence" value="ECO:0000314"/>
    <property type="project" value="MGI"/>
</dbReference>
<dbReference type="GO" id="GO:0072686">
    <property type="term" value="C:mitotic spindle"/>
    <property type="evidence" value="ECO:0000314"/>
    <property type="project" value="MGI"/>
</dbReference>
<dbReference type="GO" id="GO:0005634">
    <property type="term" value="C:nucleus"/>
    <property type="evidence" value="ECO:0000314"/>
    <property type="project" value="MGI"/>
</dbReference>
<dbReference type="GO" id="GO:0000124">
    <property type="term" value="C:SAGA complex"/>
    <property type="evidence" value="ECO:0000303"/>
    <property type="project" value="ComplexPortal"/>
</dbReference>
<dbReference type="GO" id="GO:0003677">
    <property type="term" value="F:DNA binding"/>
    <property type="evidence" value="ECO:0007669"/>
    <property type="project" value="UniProtKB-KW"/>
</dbReference>
<dbReference type="GO" id="GO:0003713">
    <property type="term" value="F:transcription coactivator activity"/>
    <property type="evidence" value="ECO:0007669"/>
    <property type="project" value="InterPro"/>
</dbReference>
<dbReference type="GO" id="GO:0008270">
    <property type="term" value="F:zinc ion binding"/>
    <property type="evidence" value="ECO:0007669"/>
    <property type="project" value="UniProtKB-KW"/>
</dbReference>
<dbReference type="GO" id="GO:0006325">
    <property type="term" value="P:chromatin organization"/>
    <property type="evidence" value="ECO:0000316"/>
    <property type="project" value="MGI"/>
</dbReference>
<dbReference type="GO" id="GO:0000278">
    <property type="term" value="P:mitotic cell cycle"/>
    <property type="evidence" value="ECO:0000315"/>
    <property type="project" value="MGI"/>
</dbReference>
<dbReference type="GO" id="GO:0051726">
    <property type="term" value="P:regulation of cell cycle"/>
    <property type="evidence" value="ECO:0000315"/>
    <property type="project" value="ComplexPortal"/>
</dbReference>
<dbReference type="GO" id="GO:0051302">
    <property type="term" value="P:regulation of cell division"/>
    <property type="evidence" value="ECO:0000314"/>
    <property type="project" value="ComplexPortal"/>
</dbReference>
<dbReference type="GO" id="GO:0006355">
    <property type="term" value="P:regulation of DNA-templated transcription"/>
    <property type="evidence" value="ECO:0000266"/>
    <property type="project" value="ComplexPortal"/>
</dbReference>
<dbReference type="GO" id="GO:0045995">
    <property type="term" value="P:regulation of embryonic development"/>
    <property type="evidence" value="ECO:0000314"/>
    <property type="project" value="ComplexPortal"/>
</dbReference>
<dbReference type="GO" id="GO:0031647">
    <property type="term" value="P:regulation of protein stability"/>
    <property type="evidence" value="ECO:0000315"/>
    <property type="project" value="MGI"/>
</dbReference>
<dbReference type="GO" id="GO:0006357">
    <property type="term" value="P:regulation of transcription by RNA polymerase II"/>
    <property type="evidence" value="ECO:0000266"/>
    <property type="project" value="ComplexPortal"/>
</dbReference>
<dbReference type="CDD" id="cd00167">
    <property type="entry name" value="SANT"/>
    <property type="match status" value="1"/>
</dbReference>
<dbReference type="CDD" id="cd02335">
    <property type="entry name" value="ZZ_ADA2"/>
    <property type="match status" value="1"/>
</dbReference>
<dbReference type="FunFam" id="1.10.10.60:FF:000110">
    <property type="entry name" value="Transcriptional adapter"/>
    <property type="match status" value="1"/>
</dbReference>
<dbReference type="FunFam" id="3.30.60.90:FF:000020">
    <property type="entry name" value="Transcriptional adapter"/>
    <property type="match status" value="1"/>
</dbReference>
<dbReference type="FunFam" id="1.10.10.10:FF:000087">
    <property type="entry name" value="Transcriptional adapter 2"/>
    <property type="match status" value="1"/>
</dbReference>
<dbReference type="Gene3D" id="3.30.60.90">
    <property type="match status" value="1"/>
</dbReference>
<dbReference type="Gene3D" id="1.10.10.60">
    <property type="entry name" value="Homeodomain-like"/>
    <property type="match status" value="1"/>
</dbReference>
<dbReference type="Gene3D" id="1.10.10.10">
    <property type="entry name" value="Winged helix-like DNA-binding domain superfamily/Winged helix DNA-binding domain"/>
    <property type="match status" value="1"/>
</dbReference>
<dbReference type="InterPro" id="IPR041983">
    <property type="entry name" value="ADA2-like_ZZ"/>
</dbReference>
<dbReference type="InterPro" id="IPR016827">
    <property type="entry name" value="Ada2/TADA2"/>
</dbReference>
<dbReference type="InterPro" id="IPR009057">
    <property type="entry name" value="Homeodomain-like_sf"/>
</dbReference>
<dbReference type="InterPro" id="IPR017930">
    <property type="entry name" value="Myb_dom"/>
</dbReference>
<dbReference type="InterPro" id="IPR001005">
    <property type="entry name" value="SANT/Myb"/>
</dbReference>
<dbReference type="InterPro" id="IPR017884">
    <property type="entry name" value="SANT_dom"/>
</dbReference>
<dbReference type="InterPro" id="IPR007526">
    <property type="entry name" value="SWIRM"/>
</dbReference>
<dbReference type="InterPro" id="IPR055141">
    <property type="entry name" value="TADA2A_B-like_dom"/>
</dbReference>
<dbReference type="InterPro" id="IPR036388">
    <property type="entry name" value="WH-like_DNA-bd_sf"/>
</dbReference>
<dbReference type="InterPro" id="IPR000433">
    <property type="entry name" value="Znf_ZZ"/>
</dbReference>
<dbReference type="InterPro" id="IPR043145">
    <property type="entry name" value="Znf_ZZ_sf"/>
</dbReference>
<dbReference type="PANTHER" id="PTHR12374:SF20">
    <property type="entry name" value="TRANSCRIPTIONAL ADAPTER 2-ALPHA"/>
    <property type="match status" value="1"/>
</dbReference>
<dbReference type="PANTHER" id="PTHR12374">
    <property type="entry name" value="TRANSCRIPTIONAL ADAPTOR 2 ADA2 -RELATED"/>
    <property type="match status" value="1"/>
</dbReference>
<dbReference type="Pfam" id="PF00249">
    <property type="entry name" value="Myb_DNA-binding"/>
    <property type="match status" value="1"/>
</dbReference>
<dbReference type="Pfam" id="PF04433">
    <property type="entry name" value="SWIRM"/>
    <property type="match status" value="1"/>
</dbReference>
<dbReference type="Pfam" id="PF22941">
    <property type="entry name" value="TADA2A-like_3rd"/>
    <property type="match status" value="1"/>
</dbReference>
<dbReference type="Pfam" id="PF25299">
    <property type="entry name" value="ZZ_ADA2"/>
    <property type="match status" value="1"/>
</dbReference>
<dbReference type="PIRSF" id="PIRSF025024">
    <property type="entry name" value="Transcriptional_adaptor_2"/>
    <property type="match status" value="1"/>
</dbReference>
<dbReference type="SMART" id="SM00717">
    <property type="entry name" value="SANT"/>
    <property type="match status" value="1"/>
</dbReference>
<dbReference type="SUPFAM" id="SSF46689">
    <property type="entry name" value="Homeodomain-like"/>
    <property type="match status" value="2"/>
</dbReference>
<dbReference type="SUPFAM" id="SSF57850">
    <property type="entry name" value="RING/U-box"/>
    <property type="match status" value="1"/>
</dbReference>
<dbReference type="PROSITE" id="PS51293">
    <property type="entry name" value="SANT"/>
    <property type="match status" value="1"/>
</dbReference>
<dbReference type="PROSITE" id="PS50934">
    <property type="entry name" value="SWIRM"/>
    <property type="match status" value="1"/>
</dbReference>
<dbReference type="PROSITE" id="PS50135">
    <property type="entry name" value="ZF_ZZ_2"/>
    <property type="match status" value="1"/>
</dbReference>
<keyword id="KW-0002">3D-structure</keyword>
<keyword id="KW-0158">Chromosome</keyword>
<keyword id="KW-0238">DNA-binding</keyword>
<keyword id="KW-1017">Isopeptide bond</keyword>
<keyword id="KW-0479">Metal-binding</keyword>
<keyword id="KW-0539">Nucleus</keyword>
<keyword id="KW-0597">Phosphoprotein</keyword>
<keyword id="KW-1185">Reference proteome</keyword>
<keyword id="KW-0804">Transcription</keyword>
<keyword id="KW-0805">Transcription regulation</keyword>
<keyword id="KW-0832">Ubl conjugation</keyword>
<keyword id="KW-0862">Zinc</keyword>
<keyword id="KW-0863">Zinc-finger</keyword>
<name>TAD2A_MOUSE</name>
<protein>
    <recommendedName>
        <fullName>Transcriptional adapter 2-alpha</fullName>
    </recommendedName>
    <alternativeName>
        <fullName>Transcriptional adapter 2-like</fullName>
        <shortName>ADA2-like protein</shortName>
    </alternativeName>
</protein>
<gene>
    <name type="primary">Tada2a</name>
    <name type="synonym">Tada2l</name>
</gene>
<reference key="1">
    <citation type="journal article" date="2005" name="Science">
        <title>The transcriptional landscape of the mammalian genome.</title>
        <authorList>
            <person name="Carninci P."/>
            <person name="Kasukawa T."/>
            <person name="Katayama S."/>
            <person name="Gough J."/>
            <person name="Frith M.C."/>
            <person name="Maeda N."/>
            <person name="Oyama R."/>
            <person name="Ravasi T."/>
            <person name="Lenhard B."/>
            <person name="Wells C."/>
            <person name="Kodzius R."/>
            <person name="Shimokawa K."/>
            <person name="Bajic V.B."/>
            <person name="Brenner S.E."/>
            <person name="Batalov S."/>
            <person name="Forrest A.R."/>
            <person name="Zavolan M."/>
            <person name="Davis M.J."/>
            <person name="Wilming L.G."/>
            <person name="Aidinis V."/>
            <person name="Allen J.E."/>
            <person name="Ambesi-Impiombato A."/>
            <person name="Apweiler R."/>
            <person name="Aturaliya R.N."/>
            <person name="Bailey T.L."/>
            <person name="Bansal M."/>
            <person name="Baxter L."/>
            <person name="Beisel K.W."/>
            <person name="Bersano T."/>
            <person name="Bono H."/>
            <person name="Chalk A.M."/>
            <person name="Chiu K.P."/>
            <person name="Choudhary V."/>
            <person name="Christoffels A."/>
            <person name="Clutterbuck D.R."/>
            <person name="Crowe M.L."/>
            <person name="Dalla E."/>
            <person name="Dalrymple B.P."/>
            <person name="de Bono B."/>
            <person name="Della Gatta G."/>
            <person name="di Bernardo D."/>
            <person name="Down T."/>
            <person name="Engstrom P."/>
            <person name="Fagiolini M."/>
            <person name="Faulkner G."/>
            <person name="Fletcher C.F."/>
            <person name="Fukushima T."/>
            <person name="Furuno M."/>
            <person name="Futaki S."/>
            <person name="Gariboldi M."/>
            <person name="Georgii-Hemming P."/>
            <person name="Gingeras T.R."/>
            <person name="Gojobori T."/>
            <person name="Green R.E."/>
            <person name="Gustincich S."/>
            <person name="Harbers M."/>
            <person name="Hayashi Y."/>
            <person name="Hensch T.K."/>
            <person name="Hirokawa N."/>
            <person name="Hill D."/>
            <person name="Huminiecki L."/>
            <person name="Iacono M."/>
            <person name="Ikeo K."/>
            <person name="Iwama A."/>
            <person name="Ishikawa T."/>
            <person name="Jakt M."/>
            <person name="Kanapin A."/>
            <person name="Katoh M."/>
            <person name="Kawasawa Y."/>
            <person name="Kelso J."/>
            <person name="Kitamura H."/>
            <person name="Kitano H."/>
            <person name="Kollias G."/>
            <person name="Krishnan S.P."/>
            <person name="Kruger A."/>
            <person name="Kummerfeld S.K."/>
            <person name="Kurochkin I.V."/>
            <person name="Lareau L.F."/>
            <person name="Lazarevic D."/>
            <person name="Lipovich L."/>
            <person name="Liu J."/>
            <person name="Liuni S."/>
            <person name="McWilliam S."/>
            <person name="Madan Babu M."/>
            <person name="Madera M."/>
            <person name="Marchionni L."/>
            <person name="Matsuda H."/>
            <person name="Matsuzawa S."/>
            <person name="Miki H."/>
            <person name="Mignone F."/>
            <person name="Miyake S."/>
            <person name="Morris K."/>
            <person name="Mottagui-Tabar S."/>
            <person name="Mulder N."/>
            <person name="Nakano N."/>
            <person name="Nakauchi H."/>
            <person name="Ng P."/>
            <person name="Nilsson R."/>
            <person name="Nishiguchi S."/>
            <person name="Nishikawa S."/>
            <person name="Nori F."/>
            <person name="Ohara O."/>
            <person name="Okazaki Y."/>
            <person name="Orlando V."/>
            <person name="Pang K.C."/>
            <person name="Pavan W.J."/>
            <person name="Pavesi G."/>
            <person name="Pesole G."/>
            <person name="Petrovsky N."/>
            <person name="Piazza S."/>
            <person name="Reed J."/>
            <person name="Reid J.F."/>
            <person name="Ring B.Z."/>
            <person name="Ringwald M."/>
            <person name="Rost B."/>
            <person name="Ruan Y."/>
            <person name="Salzberg S.L."/>
            <person name="Sandelin A."/>
            <person name="Schneider C."/>
            <person name="Schoenbach C."/>
            <person name="Sekiguchi K."/>
            <person name="Semple C.A."/>
            <person name="Seno S."/>
            <person name="Sessa L."/>
            <person name="Sheng Y."/>
            <person name="Shibata Y."/>
            <person name="Shimada H."/>
            <person name="Shimada K."/>
            <person name="Silva D."/>
            <person name="Sinclair B."/>
            <person name="Sperling S."/>
            <person name="Stupka E."/>
            <person name="Sugiura K."/>
            <person name="Sultana R."/>
            <person name="Takenaka Y."/>
            <person name="Taki K."/>
            <person name="Tammoja K."/>
            <person name="Tan S.L."/>
            <person name="Tang S."/>
            <person name="Taylor M.S."/>
            <person name="Tegner J."/>
            <person name="Teichmann S.A."/>
            <person name="Ueda H.R."/>
            <person name="van Nimwegen E."/>
            <person name="Verardo R."/>
            <person name="Wei C.L."/>
            <person name="Yagi K."/>
            <person name="Yamanishi H."/>
            <person name="Zabarovsky E."/>
            <person name="Zhu S."/>
            <person name="Zimmer A."/>
            <person name="Hide W."/>
            <person name="Bult C."/>
            <person name="Grimmond S.M."/>
            <person name="Teasdale R.D."/>
            <person name="Liu E.T."/>
            <person name="Brusic V."/>
            <person name="Quackenbush J."/>
            <person name="Wahlestedt C."/>
            <person name="Mattick J.S."/>
            <person name="Hume D.A."/>
            <person name="Kai C."/>
            <person name="Sasaki D."/>
            <person name="Tomaru Y."/>
            <person name="Fukuda S."/>
            <person name="Kanamori-Katayama M."/>
            <person name="Suzuki M."/>
            <person name="Aoki J."/>
            <person name="Arakawa T."/>
            <person name="Iida J."/>
            <person name="Imamura K."/>
            <person name="Itoh M."/>
            <person name="Kato T."/>
            <person name="Kawaji H."/>
            <person name="Kawagashira N."/>
            <person name="Kawashima T."/>
            <person name="Kojima M."/>
            <person name="Kondo S."/>
            <person name="Konno H."/>
            <person name="Nakano K."/>
            <person name="Ninomiya N."/>
            <person name="Nishio T."/>
            <person name="Okada M."/>
            <person name="Plessy C."/>
            <person name="Shibata K."/>
            <person name="Shiraki T."/>
            <person name="Suzuki S."/>
            <person name="Tagami M."/>
            <person name="Waki K."/>
            <person name="Watahiki A."/>
            <person name="Okamura-Oho Y."/>
            <person name="Suzuki H."/>
            <person name="Kawai J."/>
            <person name="Hayashizaki Y."/>
        </authorList>
    </citation>
    <scope>NUCLEOTIDE SEQUENCE [LARGE SCALE MRNA]</scope>
    <source>
        <strain>C57BL/6J</strain>
        <tissue>Embryo</tissue>
        <tissue>Inner ear</tissue>
    </source>
</reference>
<reference key="2">
    <citation type="journal article" date="2009" name="PLoS Biol.">
        <title>Lineage-specific biology revealed by a finished genome assembly of the mouse.</title>
        <authorList>
            <person name="Church D.M."/>
            <person name="Goodstadt L."/>
            <person name="Hillier L.W."/>
            <person name="Zody M.C."/>
            <person name="Goldstein S."/>
            <person name="She X."/>
            <person name="Bult C.J."/>
            <person name="Agarwala R."/>
            <person name="Cherry J.L."/>
            <person name="DiCuccio M."/>
            <person name="Hlavina W."/>
            <person name="Kapustin Y."/>
            <person name="Meric P."/>
            <person name="Maglott D."/>
            <person name="Birtle Z."/>
            <person name="Marques A.C."/>
            <person name="Graves T."/>
            <person name="Zhou S."/>
            <person name="Teague B."/>
            <person name="Potamousis K."/>
            <person name="Churas C."/>
            <person name="Place M."/>
            <person name="Herschleb J."/>
            <person name="Runnheim R."/>
            <person name="Forrest D."/>
            <person name="Amos-Landgraf J."/>
            <person name="Schwartz D.C."/>
            <person name="Cheng Z."/>
            <person name="Lindblad-Toh K."/>
            <person name="Eichler E.E."/>
            <person name="Ponting C.P."/>
        </authorList>
    </citation>
    <scope>NUCLEOTIDE SEQUENCE [LARGE SCALE GENOMIC DNA]</scope>
    <source>
        <strain>C57BL/6J</strain>
    </source>
</reference>
<reference key="3">
    <citation type="journal article" date="2004" name="Genome Res.">
        <title>The status, quality, and expansion of the NIH full-length cDNA project: the Mammalian Gene Collection (MGC).</title>
        <authorList>
            <consortium name="The MGC Project Team"/>
        </authorList>
    </citation>
    <scope>NUCLEOTIDE SEQUENCE [LARGE SCALE MRNA]</scope>
    <source>
        <strain>Czech II</strain>
        <tissue>Mammary gland</tissue>
        <tissue>Mammary tumor</tissue>
    </source>
</reference>
<reference key="4">
    <citation type="journal article" date="2005" name="Nat. Struct. Mol. Biol.">
        <title>Structure and chromosomal DNA binding of the SWIRM domain.</title>
        <authorList>
            <person name="Qian C."/>
            <person name="Zhang Q."/>
            <person name="Li S."/>
            <person name="Zeng L."/>
            <person name="Walsh M.J."/>
            <person name="Zhou M.-M."/>
        </authorList>
    </citation>
    <scope>STRUCTURE BY NMR OF 355-443</scope>
    <scope>FUNCTION</scope>
    <scope>SUBCELLULAR LOCATION</scope>
    <scope>MUTAGENESIS OF LYS-426; ARG-428 AND LYS-429</scope>
</reference>
<reference key="5">
    <citation type="journal article" date="2007" name="J. Mol. Biol.">
        <title>Structural and functional differences of SWIRM domain subtypes.</title>
        <authorList>
            <person name="Yoneyama M."/>
            <person name="Tochio N."/>
            <person name="Umehara T."/>
            <person name="Koshiba S."/>
            <person name="Inoue M."/>
            <person name="Yabuki T."/>
            <person name="Aoki M."/>
            <person name="Seki E."/>
            <person name="Matsuda T."/>
            <person name="Watanabe S."/>
            <person name="Tomo Y."/>
            <person name="Nishimura Y."/>
            <person name="Harada T."/>
            <person name="Terada T."/>
            <person name="Shirouzu M."/>
            <person name="Hayashizaki Y."/>
            <person name="Ohara O."/>
            <person name="Tanaka A."/>
            <person name="Kigawa T."/>
            <person name="Yokoyama S."/>
        </authorList>
    </citation>
    <scope>STRUCTURE BY NMR OF 343-443</scope>
</reference>
<proteinExistence type="evidence at protein level"/>
<sequence>MDRLGSFSNDPSDKPPCRGCSSYLTEPYIKCAECGPPPFFLCLQCFTRGFEYKKHQSDHTYEIMTSDFPVLDPSWTAQEEMALLEAVMDCGFGNWQDVANQMCTKTKEECEKHYMKHFINNPLFASTLLNLKQAEAAKAADTAIPFHSADDPPRPAFDSLLSRDMAGYMPARADFIEEFDNYAEWDLRDIDFVEDDSDILHALKMAVVDIYHSRLKERQRRKKIIRDHGLVNLRKFRLMERRYPKEVQDLYETMRRFARIVGPVEHDKFIESHALEFELRREIKRLQEYRTAGITNFCSARTYDHLKKTREEERLKRTMLSEVLQYIQDSSACQQWLRRQADIDSGLSPSVLMASNSGRRSAPPLNLTGLPGTEKLNEKEKELCQVVRLVPGAYLEYKSALLNECHKQGGLRLAQARALIKIDVNKTRKIYDFLIREGYITKA</sequence>